<gene>
    <name evidence="1" type="primary">cas2</name>
    <name type="ordered locus">Mchl_1037</name>
</gene>
<reference key="1">
    <citation type="submission" date="2008-12" db="EMBL/GenBank/DDBJ databases">
        <title>Complete sequence of chromosome of Methylobacterium chloromethanicum CM4.</title>
        <authorList>
            <consortium name="US DOE Joint Genome Institute"/>
            <person name="Lucas S."/>
            <person name="Copeland A."/>
            <person name="Lapidus A."/>
            <person name="Glavina del Rio T."/>
            <person name="Dalin E."/>
            <person name="Tice H."/>
            <person name="Bruce D."/>
            <person name="Goodwin L."/>
            <person name="Pitluck S."/>
            <person name="Chertkov O."/>
            <person name="Brettin T."/>
            <person name="Detter J.C."/>
            <person name="Han C."/>
            <person name="Larimer F."/>
            <person name="Land M."/>
            <person name="Hauser L."/>
            <person name="Kyrpides N."/>
            <person name="Mikhailova N."/>
            <person name="Marx C."/>
            <person name="Richardson P."/>
        </authorList>
    </citation>
    <scope>NUCLEOTIDE SEQUENCE [LARGE SCALE GENOMIC DNA]</scope>
    <source>
        <strain>CM4 / NCIMB 13688</strain>
    </source>
</reference>
<sequence length="95" mass="11138">MAVFLIAYDLVNERRGTHDYQPLWDELKRLGAHRTQFSLWLVSANNTTAEVRQHFQQFVDSNDRIWVTRLRKSQYDYANAIGGTNNWLSNNPPEA</sequence>
<organism>
    <name type="scientific">Methylorubrum extorquens (strain CM4 / NCIMB 13688)</name>
    <name type="common">Methylobacterium extorquens</name>
    <dbReference type="NCBI Taxonomy" id="440085"/>
    <lineage>
        <taxon>Bacteria</taxon>
        <taxon>Pseudomonadati</taxon>
        <taxon>Pseudomonadota</taxon>
        <taxon>Alphaproteobacteria</taxon>
        <taxon>Hyphomicrobiales</taxon>
        <taxon>Methylobacteriaceae</taxon>
        <taxon>Methylorubrum</taxon>
    </lineage>
</organism>
<feature type="chain" id="PRO_0000417719" description="CRISPR-associated endoribonuclease Cas2">
    <location>
        <begin position="1"/>
        <end position="95"/>
    </location>
</feature>
<feature type="binding site" evidence="1">
    <location>
        <position position="9"/>
    </location>
    <ligand>
        <name>Mg(2+)</name>
        <dbReference type="ChEBI" id="CHEBI:18420"/>
        <note>catalytic</note>
    </ligand>
</feature>
<keyword id="KW-0051">Antiviral defense</keyword>
<keyword id="KW-0255">Endonuclease</keyword>
<keyword id="KW-0378">Hydrolase</keyword>
<keyword id="KW-0460">Magnesium</keyword>
<keyword id="KW-0479">Metal-binding</keyword>
<keyword id="KW-0540">Nuclease</keyword>
<proteinExistence type="inferred from homology"/>
<name>CAS2_METC4</name>
<dbReference type="EC" id="3.1.-.-" evidence="1"/>
<dbReference type="EMBL" id="CP001298">
    <property type="protein sequence ID" value="ACK81946.1"/>
    <property type="molecule type" value="Genomic_DNA"/>
</dbReference>
<dbReference type="RefSeq" id="WP_003599826.1">
    <property type="nucleotide sequence ID" value="NC_011757.1"/>
</dbReference>
<dbReference type="SMR" id="B7KNJ8"/>
<dbReference type="GeneID" id="72992814"/>
<dbReference type="KEGG" id="mch:Mchl_1037"/>
<dbReference type="HOGENOM" id="CLU_179928_2_0_5"/>
<dbReference type="Proteomes" id="UP000002385">
    <property type="component" value="Chromosome"/>
</dbReference>
<dbReference type="GO" id="GO:0046872">
    <property type="term" value="F:metal ion binding"/>
    <property type="evidence" value="ECO:0007669"/>
    <property type="project" value="UniProtKB-UniRule"/>
</dbReference>
<dbReference type="GO" id="GO:0004521">
    <property type="term" value="F:RNA endonuclease activity"/>
    <property type="evidence" value="ECO:0007669"/>
    <property type="project" value="InterPro"/>
</dbReference>
<dbReference type="GO" id="GO:0051607">
    <property type="term" value="P:defense response to virus"/>
    <property type="evidence" value="ECO:0007669"/>
    <property type="project" value="UniProtKB-UniRule"/>
</dbReference>
<dbReference type="GO" id="GO:0043571">
    <property type="term" value="P:maintenance of CRISPR repeat elements"/>
    <property type="evidence" value="ECO:0007669"/>
    <property type="project" value="UniProtKB-UniRule"/>
</dbReference>
<dbReference type="HAMAP" id="MF_01471">
    <property type="entry name" value="Cas2"/>
    <property type="match status" value="1"/>
</dbReference>
<dbReference type="InterPro" id="IPR021127">
    <property type="entry name" value="CRISPR_associated_Cas2"/>
</dbReference>
<dbReference type="InterPro" id="IPR019199">
    <property type="entry name" value="Virulence_VapD/CRISPR_Cas2"/>
</dbReference>
<dbReference type="NCBIfam" id="TIGR01573">
    <property type="entry name" value="cas2"/>
    <property type="match status" value="1"/>
</dbReference>
<dbReference type="Pfam" id="PF09827">
    <property type="entry name" value="CRISPR_Cas2"/>
    <property type="match status" value="1"/>
</dbReference>
<dbReference type="SUPFAM" id="SSF143430">
    <property type="entry name" value="TTP0101/SSO1404-like"/>
    <property type="match status" value="1"/>
</dbReference>
<evidence type="ECO:0000255" key="1">
    <source>
        <dbReference type="HAMAP-Rule" id="MF_01471"/>
    </source>
</evidence>
<comment type="function">
    <text evidence="1">CRISPR (clustered regularly interspaced short palindromic repeat), is an adaptive immune system that provides protection against mobile genetic elements (viruses, transposable elements and conjugative plasmids). CRISPR clusters contain sequences complementary to antecedent mobile elements and target invading nucleic acids. CRISPR clusters are transcribed and processed into CRISPR RNA (crRNA). Functions as a ssRNA-specific endoribonuclease. Involved in the integration of spacer DNA into the CRISPR cassette.</text>
</comment>
<comment type="cofactor">
    <cofactor evidence="1">
        <name>Mg(2+)</name>
        <dbReference type="ChEBI" id="CHEBI:18420"/>
    </cofactor>
</comment>
<comment type="subunit">
    <text evidence="1">Homodimer, forms a heterotetramer with a Cas1 homodimer.</text>
</comment>
<comment type="similarity">
    <text evidence="1">Belongs to the CRISPR-associated endoribonuclease Cas2 protein family.</text>
</comment>
<protein>
    <recommendedName>
        <fullName evidence="1">CRISPR-associated endoribonuclease Cas2</fullName>
        <ecNumber evidence="1">3.1.-.-</ecNumber>
    </recommendedName>
</protein>
<accession>B7KNJ8</accession>